<accession>Q9VNJ5</accession>
<accession>B6IDI9</accession>
<accession>Q5U173</accession>
<accession>Q8SY40</accession>
<accession>Q9U477</accession>
<dbReference type="EMBL" id="AF200691">
    <property type="protein sequence ID" value="AAF23397.1"/>
    <property type="molecule type" value="mRNA"/>
</dbReference>
<dbReference type="EMBL" id="AE014297">
    <property type="protein sequence ID" value="AAF51938.1"/>
    <property type="molecule type" value="Genomic_DNA"/>
</dbReference>
<dbReference type="EMBL" id="AY075394">
    <property type="protein sequence ID" value="AAL68228.1"/>
    <property type="molecule type" value="mRNA"/>
</dbReference>
<dbReference type="EMBL" id="BT016019">
    <property type="protein sequence ID" value="AAV36904.1"/>
    <property type="molecule type" value="mRNA"/>
</dbReference>
<dbReference type="EMBL" id="BT050429">
    <property type="protein sequence ID" value="ACJ13136.1"/>
    <property type="molecule type" value="mRNA"/>
</dbReference>
<dbReference type="RefSeq" id="NP_524734.2">
    <property type="nucleotide sequence ID" value="NM_079995.3"/>
</dbReference>
<dbReference type="PDB" id="6TBU">
    <property type="method" value="EM"/>
    <property type="resolution" value="3.16 A"/>
    <property type="chains" value="A=1-1218"/>
</dbReference>
<dbReference type="PDB" id="6TD6">
    <property type="method" value="EM"/>
    <property type="resolution" value="4.76 A"/>
    <property type="chains" value="A=1-1218"/>
</dbReference>
<dbReference type="PDBsum" id="6TBU"/>
<dbReference type="PDBsum" id="6TD6"/>
<dbReference type="EMDB" id="EMD-10452"/>
<dbReference type="EMDB" id="EMD-10464"/>
<dbReference type="SMR" id="Q9VNJ5"/>
<dbReference type="BioGRID" id="68938">
    <property type="interactions" value="5"/>
</dbReference>
<dbReference type="FunCoup" id="Q9VNJ5">
    <property type="interactions" value="225"/>
</dbReference>
<dbReference type="IntAct" id="Q9VNJ5">
    <property type="interactions" value="1"/>
</dbReference>
<dbReference type="STRING" id="7227.FBpp0078314"/>
<dbReference type="TCDB" id="2.A.6.9.1">
    <property type="family name" value="the resistance-nodulation-cell division (rnd) superfamily"/>
</dbReference>
<dbReference type="GlyCosmos" id="Q9VNJ5">
    <property type="glycosylation" value="9 sites, No reported glycans"/>
</dbReference>
<dbReference type="GlyGen" id="Q9VNJ5">
    <property type="glycosylation" value="10 sites"/>
</dbReference>
<dbReference type="iPTMnet" id="Q9VNJ5"/>
<dbReference type="PaxDb" id="7227-FBpp0078314"/>
<dbReference type="DNASU" id="44274"/>
<dbReference type="EnsemblMetazoa" id="FBtr0078665">
    <property type="protein sequence ID" value="FBpp0078314"/>
    <property type="gene ID" value="FBgn0029088"/>
</dbReference>
<dbReference type="GeneID" id="44274"/>
<dbReference type="KEGG" id="dme:Dmel_CG2019"/>
<dbReference type="UCSC" id="CG2019-RA">
    <property type="organism name" value="d. melanogaster"/>
</dbReference>
<dbReference type="AGR" id="FB:FBgn0029088"/>
<dbReference type="CTD" id="44274"/>
<dbReference type="FlyBase" id="FBgn0029088">
    <property type="gene designation" value="disp"/>
</dbReference>
<dbReference type="VEuPathDB" id="VectorBase:FBgn0029088"/>
<dbReference type="eggNOG" id="KOG3664">
    <property type="taxonomic scope" value="Eukaryota"/>
</dbReference>
<dbReference type="GeneTree" id="ENSGT00940000168705"/>
<dbReference type="HOGENOM" id="CLU_004076_0_0_1"/>
<dbReference type="InParanoid" id="Q9VNJ5"/>
<dbReference type="OMA" id="NGLLAMC"/>
<dbReference type="OrthoDB" id="193905at2759"/>
<dbReference type="PhylomeDB" id="Q9VNJ5"/>
<dbReference type="Reactome" id="R-DME-209471">
    <property type="pathway name" value="Formation and transport of the N-HH ligand"/>
</dbReference>
<dbReference type="SignaLink" id="Q9VNJ5"/>
<dbReference type="BioGRID-ORCS" id="44274">
    <property type="hits" value="0 hits in 3 CRISPR screens"/>
</dbReference>
<dbReference type="GenomeRNAi" id="44274"/>
<dbReference type="PRO" id="PR:Q9VNJ5"/>
<dbReference type="Proteomes" id="UP000000803">
    <property type="component" value="Chromosome 3R"/>
</dbReference>
<dbReference type="Bgee" id="FBgn0029088">
    <property type="expression patterns" value="Expressed in eye photoreceptor cell (Drosophila) in open tracheal system trachea and 107 other cell types or tissues"/>
</dbReference>
<dbReference type="GO" id="GO:0035230">
    <property type="term" value="C:cytoneme"/>
    <property type="evidence" value="ECO:0000314"/>
    <property type="project" value="FlyBase"/>
</dbReference>
<dbReference type="GO" id="GO:0016020">
    <property type="term" value="C:membrane"/>
    <property type="evidence" value="ECO:0000318"/>
    <property type="project" value="GO_Central"/>
</dbReference>
<dbReference type="GO" id="GO:0005886">
    <property type="term" value="C:plasma membrane"/>
    <property type="evidence" value="ECO:0000304"/>
    <property type="project" value="Reactome"/>
</dbReference>
<dbReference type="GO" id="GO:0008354">
    <property type="term" value="P:germ cell migration"/>
    <property type="evidence" value="ECO:0000316"/>
    <property type="project" value="FlyBase"/>
</dbReference>
<dbReference type="GO" id="GO:0007225">
    <property type="term" value="P:patched ligand maturation"/>
    <property type="evidence" value="ECO:0000314"/>
    <property type="project" value="FlyBase"/>
</dbReference>
<dbReference type="GO" id="GO:0007367">
    <property type="term" value="P:segment polarity determination"/>
    <property type="evidence" value="ECO:0000315"/>
    <property type="project" value="FlyBase"/>
</dbReference>
<dbReference type="GO" id="GO:0007224">
    <property type="term" value="P:smoothened signaling pathway"/>
    <property type="evidence" value="ECO:0000318"/>
    <property type="project" value="GO_Central"/>
</dbReference>
<dbReference type="GO" id="GO:0035222">
    <property type="term" value="P:wing disc pattern formation"/>
    <property type="evidence" value="ECO:0000315"/>
    <property type="project" value="FlyBase"/>
</dbReference>
<dbReference type="FunFam" id="1.20.1640.10:FF:000070">
    <property type="entry name" value="GM10585"/>
    <property type="match status" value="1"/>
</dbReference>
<dbReference type="Gene3D" id="1.20.1640.10">
    <property type="entry name" value="Multidrug efflux transporter AcrB transmembrane domain"/>
    <property type="match status" value="2"/>
</dbReference>
<dbReference type="InterPro" id="IPR052081">
    <property type="entry name" value="Dispatched_Hh_regulator"/>
</dbReference>
<dbReference type="InterPro" id="IPR053958">
    <property type="entry name" value="HMGCR/SNAP/NPC1-like_SSD"/>
</dbReference>
<dbReference type="InterPro" id="IPR000731">
    <property type="entry name" value="SSD"/>
</dbReference>
<dbReference type="PANTHER" id="PTHR45951:SF3">
    <property type="entry name" value="PROTEIN DISPATCHED"/>
    <property type="match status" value="1"/>
</dbReference>
<dbReference type="PANTHER" id="PTHR45951">
    <property type="entry name" value="PROTEIN DISPATCHED-RELATED"/>
    <property type="match status" value="1"/>
</dbReference>
<dbReference type="Pfam" id="PF12349">
    <property type="entry name" value="Sterol-sensing"/>
    <property type="match status" value="1"/>
</dbReference>
<dbReference type="SUPFAM" id="SSF82866">
    <property type="entry name" value="Multidrug efflux transporter AcrB transmembrane domain"/>
    <property type="match status" value="2"/>
</dbReference>
<dbReference type="PROSITE" id="PS50156">
    <property type="entry name" value="SSD"/>
    <property type="match status" value="1"/>
</dbReference>
<comment type="function">
    <text evidence="4 5 6">Segment polarity protein which functions in hedgehog (Hh) signaling. Regulates the trafficking and the release of cholesterol-modified hedgehog protein from cells of the posterior compartment (P cells) and is hence required for the effective production of the Hh signal.</text>
</comment>
<comment type="subcellular location">
    <subcellularLocation>
        <location evidence="8">Membrane</location>
        <topology evidence="8">Multi-pass membrane protein</topology>
    </subcellularLocation>
</comment>
<comment type="developmental stage">
    <text evidence="4">Ubiquitously expressed throughout the embryo and the imaginal discs.</text>
</comment>
<comment type="disruption phenotype">
    <text evidence="4">Death during embryogenesis with a strong segment-polarity phenotype.</text>
</comment>
<comment type="similarity">
    <text evidence="8">Belongs to the dispatched family.</text>
</comment>
<name>DISP_DROME</name>
<organism>
    <name type="scientific">Drosophila melanogaster</name>
    <name type="common">Fruit fly</name>
    <dbReference type="NCBI Taxonomy" id="7227"/>
    <lineage>
        <taxon>Eukaryota</taxon>
        <taxon>Metazoa</taxon>
        <taxon>Ecdysozoa</taxon>
        <taxon>Arthropoda</taxon>
        <taxon>Hexapoda</taxon>
        <taxon>Insecta</taxon>
        <taxon>Pterygota</taxon>
        <taxon>Neoptera</taxon>
        <taxon>Endopterygota</taxon>
        <taxon>Diptera</taxon>
        <taxon>Brachycera</taxon>
        <taxon>Muscomorpha</taxon>
        <taxon>Ephydroidea</taxon>
        <taxon>Drosophilidae</taxon>
        <taxon>Drosophila</taxon>
        <taxon>Sophophora</taxon>
    </lineage>
</organism>
<evidence type="ECO:0000255" key="1"/>
<evidence type="ECO:0000255" key="2">
    <source>
        <dbReference type="PROSITE-ProRule" id="PRU00199"/>
    </source>
</evidence>
<evidence type="ECO:0000256" key="3">
    <source>
        <dbReference type="SAM" id="MobiDB-lite"/>
    </source>
</evidence>
<evidence type="ECO:0000269" key="4">
    <source>
    </source>
</evidence>
<evidence type="ECO:0000269" key="5">
    <source>
    </source>
</evidence>
<evidence type="ECO:0000269" key="6">
    <source>
    </source>
</evidence>
<evidence type="ECO:0000269" key="7">
    <source>
    </source>
</evidence>
<evidence type="ECO:0000305" key="8"/>
<evidence type="ECO:0007829" key="9">
    <source>
        <dbReference type="PDB" id="6TBU"/>
    </source>
</evidence>
<keyword id="KW-0002">3D-structure</keyword>
<keyword id="KW-0217">Developmental protein</keyword>
<keyword id="KW-0325">Glycoprotein</keyword>
<keyword id="KW-0472">Membrane</keyword>
<keyword id="KW-1185">Reference proteome</keyword>
<keyword id="KW-0812">Transmembrane</keyword>
<keyword id="KW-1133">Transmembrane helix</keyword>
<reference key="1">
    <citation type="journal article" date="1999" name="Cell">
        <title>Dispatched, a novel sterol-sensing domain protein dedicated to the release of cholesterol-modified hedgehog from signaling cells.</title>
        <authorList>
            <person name="Burke R."/>
            <person name="Nellen D."/>
            <person name="Bellotto M."/>
            <person name="Hafen E."/>
            <person name="Senti K.-A."/>
            <person name="Dickson B.J."/>
            <person name="Basler K."/>
        </authorList>
    </citation>
    <scope>NUCLEOTIDE SEQUENCE [MRNA]</scope>
    <scope>FUNCTION</scope>
    <scope>DEVELOPMENTAL STAGE</scope>
    <scope>DISRUPTION PHENOTYPE</scope>
</reference>
<reference key="2">
    <citation type="journal article" date="2000" name="Science">
        <title>The genome sequence of Drosophila melanogaster.</title>
        <authorList>
            <person name="Adams M.D."/>
            <person name="Celniker S.E."/>
            <person name="Holt R.A."/>
            <person name="Evans C.A."/>
            <person name="Gocayne J.D."/>
            <person name="Amanatides P.G."/>
            <person name="Scherer S.E."/>
            <person name="Li P.W."/>
            <person name="Hoskins R.A."/>
            <person name="Galle R.F."/>
            <person name="George R.A."/>
            <person name="Lewis S.E."/>
            <person name="Richards S."/>
            <person name="Ashburner M."/>
            <person name="Henderson S.N."/>
            <person name="Sutton G.G."/>
            <person name="Wortman J.R."/>
            <person name="Yandell M.D."/>
            <person name="Zhang Q."/>
            <person name="Chen L.X."/>
            <person name="Brandon R.C."/>
            <person name="Rogers Y.-H.C."/>
            <person name="Blazej R.G."/>
            <person name="Champe M."/>
            <person name="Pfeiffer B.D."/>
            <person name="Wan K.H."/>
            <person name="Doyle C."/>
            <person name="Baxter E.G."/>
            <person name="Helt G."/>
            <person name="Nelson C.R."/>
            <person name="Miklos G.L.G."/>
            <person name="Abril J.F."/>
            <person name="Agbayani A."/>
            <person name="An H.-J."/>
            <person name="Andrews-Pfannkoch C."/>
            <person name="Baldwin D."/>
            <person name="Ballew R.M."/>
            <person name="Basu A."/>
            <person name="Baxendale J."/>
            <person name="Bayraktaroglu L."/>
            <person name="Beasley E.M."/>
            <person name="Beeson K.Y."/>
            <person name="Benos P.V."/>
            <person name="Berman B.P."/>
            <person name="Bhandari D."/>
            <person name="Bolshakov S."/>
            <person name="Borkova D."/>
            <person name="Botchan M.R."/>
            <person name="Bouck J."/>
            <person name="Brokstein P."/>
            <person name="Brottier P."/>
            <person name="Burtis K.C."/>
            <person name="Busam D.A."/>
            <person name="Butler H."/>
            <person name="Cadieu E."/>
            <person name="Center A."/>
            <person name="Chandra I."/>
            <person name="Cherry J.M."/>
            <person name="Cawley S."/>
            <person name="Dahlke C."/>
            <person name="Davenport L.B."/>
            <person name="Davies P."/>
            <person name="de Pablos B."/>
            <person name="Delcher A."/>
            <person name="Deng Z."/>
            <person name="Mays A.D."/>
            <person name="Dew I."/>
            <person name="Dietz S.M."/>
            <person name="Dodson K."/>
            <person name="Doup L.E."/>
            <person name="Downes M."/>
            <person name="Dugan-Rocha S."/>
            <person name="Dunkov B.C."/>
            <person name="Dunn P."/>
            <person name="Durbin K.J."/>
            <person name="Evangelista C.C."/>
            <person name="Ferraz C."/>
            <person name="Ferriera S."/>
            <person name="Fleischmann W."/>
            <person name="Fosler C."/>
            <person name="Gabrielian A.E."/>
            <person name="Garg N.S."/>
            <person name="Gelbart W.M."/>
            <person name="Glasser K."/>
            <person name="Glodek A."/>
            <person name="Gong F."/>
            <person name="Gorrell J.H."/>
            <person name="Gu Z."/>
            <person name="Guan P."/>
            <person name="Harris M."/>
            <person name="Harris N.L."/>
            <person name="Harvey D.A."/>
            <person name="Heiman T.J."/>
            <person name="Hernandez J.R."/>
            <person name="Houck J."/>
            <person name="Hostin D."/>
            <person name="Houston K.A."/>
            <person name="Howland T.J."/>
            <person name="Wei M.-H."/>
            <person name="Ibegwam C."/>
            <person name="Jalali M."/>
            <person name="Kalush F."/>
            <person name="Karpen G.H."/>
            <person name="Ke Z."/>
            <person name="Kennison J.A."/>
            <person name="Ketchum K.A."/>
            <person name="Kimmel B.E."/>
            <person name="Kodira C.D."/>
            <person name="Kraft C.L."/>
            <person name="Kravitz S."/>
            <person name="Kulp D."/>
            <person name="Lai Z."/>
            <person name="Lasko P."/>
            <person name="Lei Y."/>
            <person name="Levitsky A.A."/>
            <person name="Li J.H."/>
            <person name="Li Z."/>
            <person name="Liang Y."/>
            <person name="Lin X."/>
            <person name="Liu X."/>
            <person name="Mattei B."/>
            <person name="McIntosh T.C."/>
            <person name="McLeod M.P."/>
            <person name="McPherson D."/>
            <person name="Merkulov G."/>
            <person name="Milshina N.V."/>
            <person name="Mobarry C."/>
            <person name="Morris J."/>
            <person name="Moshrefi A."/>
            <person name="Mount S.M."/>
            <person name="Moy M."/>
            <person name="Murphy B."/>
            <person name="Murphy L."/>
            <person name="Muzny D.M."/>
            <person name="Nelson D.L."/>
            <person name="Nelson D.R."/>
            <person name="Nelson K.A."/>
            <person name="Nixon K."/>
            <person name="Nusskern D.R."/>
            <person name="Pacleb J.M."/>
            <person name="Palazzolo M."/>
            <person name="Pittman G.S."/>
            <person name="Pan S."/>
            <person name="Pollard J."/>
            <person name="Puri V."/>
            <person name="Reese M.G."/>
            <person name="Reinert K."/>
            <person name="Remington K."/>
            <person name="Saunders R.D.C."/>
            <person name="Scheeler F."/>
            <person name="Shen H."/>
            <person name="Shue B.C."/>
            <person name="Siden-Kiamos I."/>
            <person name="Simpson M."/>
            <person name="Skupski M.P."/>
            <person name="Smith T.J."/>
            <person name="Spier E."/>
            <person name="Spradling A.C."/>
            <person name="Stapleton M."/>
            <person name="Strong R."/>
            <person name="Sun E."/>
            <person name="Svirskas R."/>
            <person name="Tector C."/>
            <person name="Turner R."/>
            <person name="Venter E."/>
            <person name="Wang A.H."/>
            <person name="Wang X."/>
            <person name="Wang Z.-Y."/>
            <person name="Wassarman D.A."/>
            <person name="Weinstock G.M."/>
            <person name="Weissenbach J."/>
            <person name="Williams S.M."/>
            <person name="Woodage T."/>
            <person name="Worley K.C."/>
            <person name="Wu D."/>
            <person name="Yang S."/>
            <person name="Yao Q.A."/>
            <person name="Ye J."/>
            <person name="Yeh R.-F."/>
            <person name="Zaveri J.S."/>
            <person name="Zhan M."/>
            <person name="Zhang G."/>
            <person name="Zhao Q."/>
            <person name="Zheng L."/>
            <person name="Zheng X.H."/>
            <person name="Zhong F.N."/>
            <person name="Zhong W."/>
            <person name="Zhou X."/>
            <person name="Zhu S.C."/>
            <person name="Zhu X."/>
            <person name="Smith H.O."/>
            <person name="Gibbs R.A."/>
            <person name="Myers E.W."/>
            <person name="Rubin G.M."/>
            <person name="Venter J.C."/>
        </authorList>
    </citation>
    <scope>NUCLEOTIDE SEQUENCE [LARGE SCALE GENOMIC DNA]</scope>
    <source>
        <strain>Berkeley</strain>
    </source>
</reference>
<reference key="3">
    <citation type="journal article" date="2002" name="Genome Biol.">
        <title>Annotation of the Drosophila melanogaster euchromatic genome: a systematic review.</title>
        <authorList>
            <person name="Misra S."/>
            <person name="Crosby M.A."/>
            <person name="Mungall C.J."/>
            <person name="Matthews B.B."/>
            <person name="Campbell K.S."/>
            <person name="Hradecky P."/>
            <person name="Huang Y."/>
            <person name="Kaminker J.S."/>
            <person name="Millburn G.H."/>
            <person name="Prochnik S.E."/>
            <person name="Smith C.D."/>
            <person name="Tupy J.L."/>
            <person name="Whitfield E.J."/>
            <person name="Bayraktaroglu L."/>
            <person name="Berman B.P."/>
            <person name="Bettencourt B.R."/>
            <person name="Celniker S.E."/>
            <person name="de Grey A.D.N.J."/>
            <person name="Drysdale R.A."/>
            <person name="Harris N.L."/>
            <person name="Richter J."/>
            <person name="Russo S."/>
            <person name="Schroeder A.J."/>
            <person name="Shu S.Q."/>
            <person name="Stapleton M."/>
            <person name="Yamada C."/>
            <person name="Ashburner M."/>
            <person name="Gelbart W.M."/>
            <person name="Rubin G.M."/>
            <person name="Lewis S.E."/>
        </authorList>
    </citation>
    <scope>GENOME REANNOTATION</scope>
    <source>
        <strain>Berkeley</strain>
    </source>
</reference>
<reference key="4">
    <citation type="journal article" date="2002" name="Genome Biol.">
        <title>A Drosophila full-length cDNA resource.</title>
        <authorList>
            <person name="Stapleton M."/>
            <person name="Carlson J.W."/>
            <person name="Brokstein P."/>
            <person name="Yu C."/>
            <person name="Champe M."/>
            <person name="George R.A."/>
            <person name="Guarin H."/>
            <person name="Kronmiller B."/>
            <person name="Pacleb J.M."/>
            <person name="Park S."/>
            <person name="Wan K.H."/>
            <person name="Rubin G.M."/>
            <person name="Celniker S.E."/>
        </authorList>
    </citation>
    <scope>NUCLEOTIDE SEQUENCE [LARGE SCALE MRNA]</scope>
    <source>
        <strain>Berkeley</strain>
        <tissue>Embryo</tissue>
    </source>
</reference>
<reference key="5">
    <citation type="submission" date="2008-11" db="EMBL/GenBank/DDBJ databases">
        <authorList>
            <person name="Carlson J.W."/>
            <person name="Booth B."/>
            <person name="Frise E."/>
            <person name="Park S."/>
            <person name="Wan K.H."/>
            <person name="Yu C."/>
            <person name="Celniker S.E."/>
        </authorList>
    </citation>
    <scope>NUCLEOTIDE SEQUENCE [LARGE SCALE MRNA]</scope>
    <source>
        <strain>Berkeley</strain>
    </source>
</reference>
<reference key="6">
    <citation type="journal article" date="2002" name="Cell">
        <title>Hedgehog-mediated patterning of the mammalian embryo requires transporter-like function of dispatched.</title>
        <authorList>
            <person name="Ma Y."/>
            <person name="Erkner A."/>
            <person name="Gong R."/>
            <person name="Yao S."/>
            <person name="Taipale J."/>
            <person name="Basler K."/>
            <person name="Beachy P.A."/>
        </authorList>
    </citation>
    <scope>FUNCTION</scope>
    <scope>MUTAGENESIS OF 516-ASP-ASP-517 AND ASP-1030</scope>
</reference>
<reference key="7">
    <citation type="journal article" date="2003" name="Dev. Cell">
        <title>Cholesterol modification of hedgehog is required for trafficking and movement, revealing an asymmetric cellular response to hedgehog.</title>
        <authorList>
            <person name="Gallet A."/>
            <person name="Rodriguez R."/>
            <person name="Ruel L."/>
            <person name="Therond P.P."/>
        </authorList>
    </citation>
    <scope>FUNCTION</scope>
</reference>
<reference key="8">
    <citation type="journal article" date="2007" name="Glycobiology">
        <title>Identification of N-glycosylated proteins from the central nervous system of Drosophila melanogaster.</title>
        <authorList>
            <person name="Koles K."/>
            <person name="Lim J.-M."/>
            <person name="Aoki K."/>
            <person name="Porterfield M."/>
            <person name="Tiemeyer M."/>
            <person name="Wells L."/>
            <person name="Panin V."/>
        </authorList>
    </citation>
    <scope>GLYCOSYLATION [LARGE SCALE ANALYSIS] AT ASN-388</scope>
    <scope>IDENTIFICATION BY MASS SPECTROMETRY</scope>
    <source>
        <strain>Oregon-R</strain>
        <tissue>Head</tissue>
    </source>
</reference>
<feature type="chain" id="PRO_0000310699" description="Protein dispatched">
    <location>
        <begin position="1"/>
        <end position="1218"/>
    </location>
</feature>
<feature type="transmembrane region" description="Helical" evidence="1">
    <location>
        <begin position="21"/>
        <end position="41"/>
    </location>
</feature>
<feature type="transmembrane region" description="Helical" evidence="1">
    <location>
        <begin position="443"/>
        <end position="463"/>
    </location>
</feature>
<feature type="transmembrane region" description="Helical" evidence="1">
    <location>
        <begin position="473"/>
        <end position="493"/>
    </location>
</feature>
<feature type="transmembrane region" description="Helical" evidence="1">
    <location>
        <begin position="504"/>
        <end position="524"/>
    </location>
</feature>
<feature type="transmembrane region" description="Helical" evidence="1">
    <location>
        <begin position="570"/>
        <end position="590"/>
    </location>
</feature>
<feature type="transmembrane region" description="Helical" evidence="1">
    <location>
        <begin position="598"/>
        <end position="618"/>
    </location>
</feature>
<feature type="transmembrane region" description="Helical" evidence="1">
    <location>
        <begin position="670"/>
        <end position="690"/>
    </location>
</feature>
<feature type="transmembrane region" description="Helical" evidence="1">
    <location>
        <begin position="975"/>
        <end position="995"/>
    </location>
</feature>
<feature type="transmembrane region" description="Helical" evidence="1">
    <location>
        <begin position="996"/>
        <end position="1016"/>
    </location>
</feature>
<feature type="transmembrane region" description="Helical" evidence="1">
    <location>
        <begin position="1019"/>
        <end position="1039"/>
    </location>
</feature>
<feature type="transmembrane region" description="Helical" evidence="1">
    <location>
        <begin position="1058"/>
        <end position="1078"/>
    </location>
</feature>
<feature type="transmembrane region" description="Helical" evidence="1">
    <location>
        <begin position="1087"/>
        <end position="1107"/>
    </location>
</feature>
<feature type="domain" description="SSD" evidence="2">
    <location>
        <begin position="430"/>
        <end position="624"/>
    </location>
</feature>
<feature type="region of interest" description="Disordered" evidence="3">
    <location>
        <begin position="99"/>
        <end position="135"/>
    </location>
</feature>
<feature type="compositionally biased region" description="Basic residues" evidence="3">
    <location>
        <begin position="104"/>
        <end position="124"/>
    </location>
</feature>
<feature type="glycosylation site" description="N-linked (GlcNAc...) asparagine" evidence="1">
    <location>
        <position position="127"/>
    </location>
</feature>
<feature type="glycosylation site" description="N-linked (GlcNAc...) asparagine" evidence="1">
    <location>
        <position position="176"/>
    </location>
</feature>
<feature type="glycosylation site" description="N-linked (GlcNAc...) asparagine" evidence="1">
    <location>
        <position position="197"/>
    </location>
</feature>
<feature type="glycosylation site" description="N-linked (GlcNAc...) asparagine" evidence="1">
    <location>
        <position position="264"/>
    </location>
</feature>
<feature type="glycosylation site" description="N-linked (GlcNAc...) asparagine" evidence="1">
    <location>
        <position position="319"/>
    </location>
</feature>
<feature type="glycosylation site" description="N-linked (GlcNAc...) asparagine" evidence="7">
    <location>
        <position position="388"/>
    </location>
</feature>
<feature type="glycosylation site" description="N-linked (GlcNAc...) asparagine" evidence="1">
    <location>
        <position position="767"/>
    </location>
</feature>
<feature type="glycosylation site" description="N-linked (GlcNAc...) asparagine" evidence="1">
    <location>
        <position position="883"/>
    </location>
</feature>
<feature type="glycosylation site" description="N-linked (GlcNAc...) asparagine" evidence="1">
    <location>
        <position position="891"/>
    </location>
</feature>
<feature type="mutagenesis site" description="Loss of function; when associated with A-1030." evidence="5">
    <original>DD</original>
    <variation>AA</variation>
    <location>
        <begin position="516"/>
        <end position="517"/>
    </location>
</feature>
<feature type="mutagenesis site" description="Loss of function; when associated with N-1030." evidence="5">
    <original>DD</original>
    <variation>NN</variation>
    <location>
        <begin position="516"/>
        <end position="517"/>
    </location>
</feature>
<feature type="mutagenesis site" description="Loss of function; when associated with 516-A-A-517." evidence="5">
    <original>D</original>
    <variation>A</variation>
    <location>
        <position position="1030"/>
    </location>
</feature>
<feature type="mutagenesis site" description="Loss of function; when associated with 517-N-N-517." evidence="5">
    <original>D</original>
    <variation>N</variation>
    <location>
        <position position="1030"/>
    </location>
</feature>
<feature type="sequence conflict" description="In Ref. 1; AAF23397." evidence="8" ref="1">
    <original>L</original>
    <variation>W</variation>
    <location>
        <position position="727"/>
    </location>
</feature>
<feature type="sequence conflict" description="In Ref. 4; AAV36904." evidence="8" ref="4">
    <original>D</original>
    <variation>G</variation>
    <location>
        <position position="779"/>
    </location>
</feature>
<feature type="helix" evidence="9">
    <location>
        <begin position="8"/>
        <end position="18"/>
    </location>
</feature>
<feature type="helix" evidence="9">
    <location>
        <begin position="20"/>
        <end position="41"/>
    </location>
</feature>
<feature type="helix" evidence="9">
    <location>
        <begin position="60"/>
        <end position="75"/>
    </location>
</feature>
<feature type="strand" evidence="9">
    <location>
        <begin position="76"/>
        <end position="80"/>
    </location>
</feature>
<feature type="strand" evidence="9">
    <location>
        <begin position="82"/>
        <end position="84"/>
    </location>
</feature>
<feature type="helix" evidence="9">
    <location>
        <begin position="85"/>
        <end position="88"/>
    </location>
</feature>
<feature type="strand" evidence="9">
    <location>
        <begin position="253"/>
        <end position="260"/>
    </location>
</feature>
<feature type="strand" evidence="9">
    <location>
        <begin position="269"/>
        <end position="271"/>
    </location>
</feature>
<feature type="helix" evidence="9">
    <location>
        <begin position="272"/>
        <end position="286"/>
    </location>
</feature>
<feature type="helix" evidence="9">
    <location>
        <begin position="291"/>
        <end position="294"/>
    </location>
</feature>
<feature type="helix" evidence="9">
    <location>
        <begin position="310"/>
        <end position="317"/>
    </location>
</feature>
<feature type="strand" evidence="9">
    <location>
        <begin position="318"/>
        <end position="320"/>
    </location>
</feature>
<feature type="helix" evidence="9">
    <location>
        <begin position="327"/>
        <end position="340"/>
    </location>
</feature>
<feature type="helix" evidence="9">
    <location>
        <begin position="372"/>
        <end position="379"/>
    </location>
</feature>
<feature type="strand" evidence="9">
    <location>
        <begin position="397"/>
        <end position="404"/>
    </location>
</feature>
<feature type="helix" evidence="9">
    <location>
        <begin position="410"/>
        <end position="418"/>
    </location>
</feature>
<feature type="strand" evidence="9">
    <location>
        <begin position="424"/>
        <end position="432"/>
    </location>
</feature>
<feature type="helix" evidence="9">
    <location>
        <begin position="436"/>
        <end position="466"/>
    </location>
</feature>
<feature type="helix" evidence="9">
    <location>
        <begin position="469"/>
        <end position="491"/>
    </location>
</feature>
<feature type="turn" evidence="9">
    <location>
        <begin position="492"/>
        <end position="494"/>
    </location>
</feature>
<feature type="helix" evidence="9">
    <location>
        <begin position="502"/>
        <end position="513"/>
    </location>
</feature>
<feature type="helix" evidence="9">
    <location>
        <begin position="516"/>
        <end position="530"/>
    </location>
</feature>
<feature type="helix" evidence="9">
    <location>
        <begin position="559"/>
        <end position="587"/>
    </location>
</feature>
<feature type="helix" evidence="9">
    <location>
        <begin position="588"/>
        <end position="590"/>
    </location>
</feature>
<feature type="strand" evidence="9">
    <location>
        <begin position="591"/>
        <end position="593"/>
    </location>
</feature>
<feature type="helix" evidence="9">
    <location>
        <begin position="594"/>
        <end position="628"/>
    </location>
</feature>
<feature type="helix" evidence="9">
    <location>
        <begin position="649"/>
        <end position="668"/>
    </location>
</feature>
<feature type="helix" evidence="9">
    <location>
        <begin position="671"/>
        <end position="689"/>
    </location>
</feature>
<feature type="helix" evidence="9">
    <location>
        <begin position="710"/>
        <end position="716"/>
    </location>
</feature>
<feature type="strand" evidence="9">
    <location>
        <begin position="734"/>
        <end position="740"/>
    </location>
</feature>
<feature type="helix" evidence="9">
    <location>
        <begin position="771"/>
        <end position="784"/>
    </location>
</feature>
<feature type="helix" evidence="9">
    <location>
        <begin position="802"/>
        <end position="811"/>
    </location>
</feature>
<feature type="helix" evidence="9">
    <location>
        <begin position="837"/>
        <end position="853"/>
    </location>
</feature>
<feature type="strand" evidence="9">
    <location>
        <begin position="863"/>
        <end position="867"/>
    </location>
</feature>
<feature type="strand" evidence="9">
    <location>
        <begin position="898"/>
        <end position="911"/>
    </location>
</feature>
<feature type="helix" evidence="9">
    <location>
        <begin position="916"/>
        <end position="934"/>
    </location>
</feature>
<feature type="strand" evidence="9">
    <location>
        <begin position="945"/>
        <end position="949"/>
    </location>
</feature>
<feature type="helix" evidence="9">
    <location>
        <begin position="951"/>
        <end position="981"/>
    </location>
</feature>
<feature type="helix" evidence="9">
    <location>
        <begin position="985"/>
        <end position="1009"/>
    </location>
</feature>
<feature type="helix" evidence="9">
    <location>
        <begin position="1015"/>
        <end position="1040"/>
    </location>
</feature>
<feature type="helix" evidence="9">
    <location>
        <begin position="1047"/>
        <end position="1076"/>
    </location>
</feature>
<feature type="strand" evidence="9">
    <location>
        <begin position="1078"/>
        <end position="1081"/>
    </location>
</feature>
<feature type="helix" evidence="9">
    <location>
        <begin position="1082"/>
        <end position="1113"/>
    </location>
</feature>
<protein>
    <recommendedName>
        <fullName>Protein dispatched</fullName>
    </recommendedName>
</protein>
<sequence length="1218" mass="138979">MLCFDSERMNWYYHVLARRPYLVVVSIAVYCVACIIVALVLNKLPDFSDPTLGFETRGTKIGERLTAWYNLLQETDHHGALFSNPSDLWERRRVEQGYVETKLHPNHRRRKNKHKNRNKNKRRKEQNQSSHEHHDVAQKMMQFKKRLKATSSPSPNLGFDTWIGDSGVFRDYEITNDSASSSLEPTRRTEQIEYGHNTTSVDEEEHQQRVQTKKSTWRLLKQAATLPTDGWADMHRRQPIEGFFCDSSPRKEYSHFVVQRIGPNATDSLFDLNGLLAMCQLQDQITEVPSYRAFCEPEMLTTECCRPWSLPNYAAMLANKSSCFDLTTEDVTSLHTLLLGCYEYFHDLKMDNHCNEIPHCRAPEECKRLNIVFNVLNFLTDFSFIKSNDSNVYLKYAMIFIPVAQSNRLLPLFHEWEDVELINELVEVVAMDLGLENELFNELLLTDVWLVSLGGTFVMASVWLYTGSAFITLMSCVAICFSLGLAYFFYAIVLEFEFFPYMNLLAVVVIIGIGADDVFLFLKIWHCVLTERFSNRCTLTTQSQSALPTLENSDHTESLENIMALTMRHAAASMFVTSLTTAGAFYASYSSSITAIKCFGIFAGTVVVTNYLLMITWLPASVSIMERLFATRMSCHHPMSIKLIHACKKSINRFCQMFEECITKSIMNYAYLWLLIFGALGASSAVIVFWYPGLQLPEKSHFQLFVSKHPFEVYSSLKQQFWFEKPLQAYENFKMHMHFVWGVQAVDDGDYTNPNSYGHLHYDNNFNVSSRPAQLWILDFCQSVRQQPFYKETLGMLLPNCFIENLIDYMKRRCIDDMDSTRKDRSPCCDAQFPFEPHIFEYCLPQSISNMYDTTFFRPGVAGPKFAEAPRLETEDYLGMSGNESAEYSTNGSFTPLLVKALVIEFESNVAYSTIYANIRQFYESVEHWFQMQLKTAPPELQGGWFTSDLKFYNVQDTLSHDTFVAICLAMAASLAVLLCFTVNILISIYAVLTVSLSIFNTVAVLILLGWQLNILESIAVSTAIGLAVDFSLHYGIHYRMSPVKERLAATQFVLSRIIGPTVMAATTTGLAGGIMMASNILPYIQIGVFLVVVMIVSWFYATFFLMSLLRVAGPQHGFLELKWPLWSKRSSGSSKFYERKPSQVIASEQLLTPTSSAIVELANSETHELESLNSNSLIKTISGIESAHALSSLPRDFEHSFQTMHECKYQTYPSTSN</sequence>
<proteinExistence type="evidence at protein level"/>
<gene>
    <name type="primary">disp</name>
    <name type="ORF">CG2019</name>
</gene>